<organism>
    <name type="scientific">Caenorhabditis elegans</name>
    <dbReference type="NCBI Taxonomy" id="6239"/>
    <lineage>
        <taxon>Eukaryota</taxon>
        <taxon>Metazoa</taxon>
        <taxon>Ecdysozoa</taxon>
        <taxon>Nematoda</taxon>
        <taxon>Chromadorea</taxon>
        <taxon>Rhabditida</taxon>
        <taxon>Rhabditina</taxon>
        <taxon>Rhabditomorpha</taxon>
        <taxon>Rhabditoidea</taxon>
        <taxon>Rhabditidae</taxon>
        <taxon>Peloderinae</taxon>
        <taxon>Caenorhabditis</taxon>
    </lineage>
</organism>
<gene>
    <name evidence="8" type="primary">pafo-1</name>
    <name evidence="8" type="ORF">C55A6.9</name>
</gene>
<sequence>MPQESSDAKRIEPPRKVDFMLKPRFTNTVPDVPFDAKFMTCPFVPLGRFVEFQPAAIYRDYKHAVICDDDMGLNVDLIDLKKYDEDPIETEIDEKDNILLEDDGAAKLIAKRSQQHSKLVPWMRKTEYISTEFNRFGVTADRQETKLGYNLKKNQQVEDMYRDKQSQIDAINKTFEDVRKPVKEHYSKKGVKAVEESFVFPDFDHWKHLFAHVQFDGDTITTEFEEEDERQQARESSVIKAMEFEDQKFAAVFVPTIGCLTSFMDDLELERPFDEDMKYEFLLSREYTFKMEHLPPRDRDVFIMYHRNNVFQYNEVDCNVKMTRKPKMALSRKSKLTLTYRNPSELEQKDMNKREAELYEQPKTRKQEILEKIQEKKEEGGDSSDQSSDSDDDKPQKSRSDSSSDVSSDDDSPRKKEPTVDSDSD</sequence>
<comment type="function">
    <text evidence="1">Component of the PAF1 complex which is a multifunctional complex involved in transcription initiation via genetic interactions with TATA-binding proteins, elongation and transcription-coupled histone modification.</text>
</comment>
<comment type="subunit">
    <text evidence="1">Component of the PAF1 complex which consists of at least cdc-73, ctr-9, leo-1, pafo-1 and rtfo-1.</text>
</comment>
<comment type="subcellular location">
    <subcellularLocation>
        <location evidence="5 7">Nucleus</location>
    </subcellularLocation>
    <text evidence="5 6">Nuclear localization depends on PAF1 complex components ctr-9, leo-1 and cdc-73.</text>
</comment>
<comment type="developmental stage">
    <text evidence="5">Expressed in both somatic cells and germ cells from the one-cell stage onwards.</text>
</comment>
<comment type="disruption phenotype">
    <text evidence="5">RNAi-mediated knock-down is mostly embryonic lethal. Embryogenesis proceeds more slowly, with embryos displaying defects in the positioning and shape of epidermal cells. Leo-1 partly mislocalizes to the cytoplasm, but nuclear localization of rtfo-1 is unaffected.</text>
</comment>
<comment type="similarity">
    <text evidence="7">Belongs to the PAF1 family.</text>
</comment>
<proteinExistence type="evidence at transcript level"/>
<reference key="1">
    <citation type="journal article" date="1998" name="Science">
        <title>Genome sequence of the nematode C. elegans: a platform for investigating biology.</title>
        <authorList>
            <consortium name="The C. elegans sequencing consortium"/>
        </authorList>
    </citation>
    <scope>NUCLEOTIDE SEQUENCE [LARGE SCALE GENOMIC DNA]</scope>
    <source>
        <strain>Bristol N2</strain>
    </source>
</reference>
<reference key="2">
    <citation type="journal article" date="2014" name="Dev. Biol.">
        <title>The PAF1 complex is involved in embryonic epidermal morphogenesis in Caenorhabditis elegans.</title>
        <authorList>
            <person name="Kubota Y."/>
            <person name="Tsuyama K."/>
            <person name="Takabayashi Y."/>
            <person name="Haruta N."/>
            <person name="Maruyama R."/>
            <person name="Iida N."/>
            <person name="Sugimoto A."/>
        </authorList>
    </citation>
    <scope>SUBCELLULAR LOCATION</scope>
    <scope>DEVELOPMENTAL STAGE</scope>
    <scope>DISRUPTION PHENOTYPE</scope>
</reference>
<feature type="chain" id="PRO_0000326407" description="RNA polymerase II-associated factor 1 homolog">
    <location>
        <begin position="1"/>
        <end position="425"/>
    </location>
</feature>
<feature type="region of interest" description="Disordered" evidence="4">
    <location>
        <begin position="331"/>
        <end position="425"/>
    </location>
</feature>
<feature type="coiled-coil region" evidence="3">
    <location>
        <begin position="152"/>
        <end position="174"/>
    </location>
</feature>
<feature type="compositionally biased region" description="Basic and acidic residues" evidence="4">
    <location>
        <begin position="344"/>
        <end position="380"/>
    </location>
</feature>
<feature type="compositionally biased region" description="Basic and acidic residues" evidence="4">
    <location>
        <begin position="393"/>
        <end position="402"/>
    </location>
</feature>
<keyword id="KW-0175">Coiled coil</keyword>
<keyword id="KW-0539">Nucleus</keyword>
<keyword id="KW-1185">Reference proteome</keyword>
<keyword id="KW-0804">Transcription</keyword>
<keyword id="KW-0805">Transcription regulation</keyword>
<dbReference type="EMBL" id="Z81051">
    <property type="protein sequence ID" value="CAB02869.1"/>
    <property type="molecule type" value="Genomic_DNA"/>
</dbReference>
<dbReference type="PIR" id="T20261">
    <property type="entry name" value="T20261"/>
</dbReference>
<dbReference type="RefSeq" id="NP_505925.1">
    <property type="nucleotide sequence ID" value="NM_073524.5"/>
</dbReference>
<dbReference type="SMR" id="P90783"/>
<dbReference type="BioGRID" id="44609">
    <property type="interactions" value="10"/>
</dbReference>
<dbReference type="ComplexPortal" id="CPX-966">
    <property type="entry name" value="PAF1 complex"/>
</dbReference>
<dbReference type="DIP" id="DIP-27306N"/>
<dbReference type="FunCoup" id="P90783">
    <property type="interactions" value="3292"/>
</dbReference>
<dbReference type="IntAct" id="P90783">
    <property type="interactions" value="1"/>
</dbReference>
<dbReference type="STRING" id="6239.C55A6.9.1"/>
<dbReference type="PaxDb" id="6239-C55A6.9"/>
<dbReference type="PeptideAtlas" id="P90783"/>
<dbReference type="EnsemblMetazoa" id="C55A6.9.1">
    <property type="protein sequence ID" value="C55A6.9.1"/>
    <property type="gene ID" value="WBGene00008338"/>
</dbReference>
<dbReference type="GeneID" id="179583"/>
<dbReference type="KEGG" id="cel:CELE_C55A6.9"/>
<dbReference type="UCSC" id="C55A6.9">
    <property type="organism name" value="c. elegans"/>
</dbReference>
<dbReference type="AGR" id="WB:WBGene00008338"/>
<dbReference type="CTD" id="179583"/>
<dbReference type="WormBase" id="C55A6.9">
    <property type="protein sequence ID" value="CE20614"/>
    <property type="gene ID" value="WBGene00008338"/>
    <property type="gene designation" value="pafo-1"/>
</dbReference>
<dbReference type="eggNOG" id="KOG2478">
    <property type="taxonomic scope" value="Eukaryota"/>
</dbReference>
<dbReference type="GeneTree" id="ENSGT00390000001474"/>
<dbReference type="HOGENOM" id="CLU_021991_0_1_1"/>
<dbReference type="InParanoid" id="P90783"/>
<dbReference type="OMA" id="LVCRIKY"/>
<dbReference type="OrthoDB" id="10260285at2759"/>
<dbReference type="PhylomeDB" id="P90783"/>
<dbReference type="Reactome" id="R-CEL-112382">
    <property type="pathway name" value="Formation of RNA Pol II elongation complex"/>
</dbReference>
<dbReference type="Reactome" id="R-CEL-674695">
    <property type="pathway name" value="RNA Polymerase II Pre-transcription Events"/>
</dbReference>
<dbReference type="Reactome" id="R-CEL-75955">
    <property type="pathway name" value="RNA Polymerase II Transcription Elongation"/>
</dbReference>
<dbReference type="PRO" id="PR:P90783"/>
<dbReference type="Proteomes" id="UP000001940">
    <property type="component" value="Chromosome V"/>
</dbReference>
<dbReference type="GO" id="GO:0016593">
    <property type="term" value="C:Cdc73/Paf1 complex"/>
    <property type="evidence" value="ECO:0000250"/>
    <property type="project" value="UniProtKB"/>
</dbReference>
<dbReference type="GO" id="GO:0005634">
    <property type="term" value="C:nucleus"/>
    <property type="evidence" value="ECO:0000314"/>
    <property type="project" value="WormBase"/>
</dbReference>
<dbReference type="GO" id="GO:0003682">
    <property type="term" value="F:chromatin binding"/>
    <property type="evidence" value="ECO:0000318"/>
    <property type="project" value="GO_Central"/>
</dbReference>
<dbReference type="GO" id="GO:0000993">
    <property type="term" value="F:RNA polymerase II complex binding"/>
    <property type="evidence" value="ECO:0000318"/>
    <property type="project" value="GO_Central"/>
</dbReference>
<dbReference type="GO" id="GO:0006368">
    <property type="term" value="P:transcription elongation by RNA polymerase II"/>
    <property type="evidence" value="ECO:0000303"/>
    <property type="project" value="ComplexPortal"/>
</dbReference>
<dbReference type="InterPro" id="IPR007133">
    <property type="entry name" value="RNA_pol_II-assoc_Paf1"/>
</dbReference>
<dbReference type="PANTHER" id="PTHR23188">
    <property type="entry name" value="RNA POLYMERASE II-ASSOCIATED FACTOR 1 HOMOLOG"/>
    <property type="match status" value="1"/>
</dbReference>
<dbReference type="PANTHER" id="PTHR23188:SF12">
    <property type="entry name" value="RNA POLYMERASE II-ASSOCIATED FACTOR 1 HOMOLOG"/>
    <property type="match status" value="1"/>
</dbReference>
<dbReference type="Pfam" id="PF03985">
    <property type="entry name" value="Paf1"/>
    <property type="match status" value="1"/>
</dbReference>
<protein>
    <recommendedName>
        <fullName evidence="2">RNA polymerase II-associated factor 1 homolog</fullName>
    </recommendedName>
</protein>
<name>PAF1_CAEEL</name>
<evidence type="ECO:0000250" key="1">
    <source>
        <dbReference type="UniProtKB" id="P38351"/>
    </source>
</evidence>
<evidence type="ECO:0000250" key="2">
    <source>
        <dbReference type="UniProtKB" id="Q8K2T8"/>
    </source>
</evidence>
<evidence type="ECO:0000255" key="3"/>
<evidence type="ECO:0000256" key="4">
    <source>
        <dbReference type="SAM" id="MobiDB-lite"/>
    </source>
</evidence>
<evidence type="ECO:0000269" key="5">
    <source>
    </source>
</evidence>
<evidence type="ECO:0000303" key="6">
    <source>
    </source>
</evidence>
<evidence type="ECO:0000305" key="7"/>
<evidence type="ECO:0000312" key="8">
    <source>
        <dbReference type="WormBase" id="C55A6.9"/>
    </source>
</evidence>
<accession>P90783</accession>